<name>SSPO_CHICK</name>
<accession>Q2PC93</accession>
<organism>
    <name type="scientific">Gallus gallus</name>
    <name type="common">Chicken</name>
    <dbReference type="NCBI Taxonomy" id="9031"/>
    <lineage>
        <taxon>Eukaryota</taxon>
        <taxon>Metazoa</taxon>
        <taxon>Chordata</taxon>
        <taxon>Craniata</taxon>
        <taxon>Vertebrata</taxon>
        <taxon>Euteleostomi</taxon>
        <taxon>Archelosauria</taxon>
        <taxon>Archosauria</taxon>
        <taxon>Dinosauria</taxon>
        <taxon>Saurischia</taxon>
        <taxon>Theropoda</taxon>
        <taxon>Coelurosauria</taxon>
        <taxon>Aves</taxon>
        <taxon>Neognathae</taxon>
        <taxon>Galloanserae</taxon>
        <taxon>Galliformes</taxon>
        <taxon>Phasianidae</taxon>
        <taxon>Phasianinae</taxon>
        <taxon>Gallus</taxon>
    </lineage>
</organism>
<dbReference type="EMBL" id="AJ866919">
    <property type="protein sequence ID" value="CAI29216.1"/>
    <property type="molecule type" value="mRNA"/>
</dbReference>
<dbReference type="RefSeq" id="NP_001006351.2">
    <property type="nucleotide sequence ID" value="NM_001006351.2"/>
</dbReference>
<dbReference type="SMR" id="Q2PC93"/>
<dbReference type="GlyCosmos" id="Q2PC93">
    <property type="glycosylation" value="44 sites, No reported glycans"/>
</dbReference>
<dbReference type="GlyGen" id="Q2PC93">
    <property type="glycosylation" value="49 sites"/>
</dbReference>
<dbReference type="PaxDb" id="9031-ENSGALP00000007857"/>
<dbReference type="GeneID" id="420367"/>
<dbReference type="KEGG" id="gga:420367"/>
<dbReference type="CTD" id="243369"/>
<dbReference type="VEuPathDB" id="HostDB:geneid_420367"/>
<dbReference type="eggNOG" id="KOG1215">
    <property type="taxonomic scope" value="Eukaryota"/>
</dbReference>
<dbReference type="eggNOG" id="KOG1216">
    <property type="taxonomic scope" value="Eukaryota"/>
</dbReference>
<dbReference type="eggNOG" id="KOG3611">
    <property type="taxonomic scope" value="Eukaryota"/>
</dbReference>
<dbReference type="eggNOG" id="KOG4475">
    <property type="taxonomic scope" value="Eukaryota"/>
</dbReference>
<dbReference type="InParanoid" id="Q2PC93"/>
<dbReference type="OrthoDB" id="6262482at2759"/>
<dbReference type="PhylomeDB" id="Q2PC93"/>
<dbReference type="PRO" id="PR:Q2PC93"/>
<dbReference type="Proteomes" id="UP000000539">
    <property type="component" value="Unassembled WGS sequence"/>
</dbReference>
<dbReference type="GO" id="GO:0031012">
    <property type="term" value="C:extracellular matrix"/>
    <property type="evidence" value="ECO:0000318"/>
    <property type="project" value="GO_Central"/>
</dbReference>
<dbReference type="GO" id="GO:0005615">
    <property type="term" value="C:extracellular space"/>
    <property type="evidence" value="ECO:0000318"/>
    <property type="project" value="GO_Central"/>
</dbReference>
<dbReference type="GO" id="GO:0007155">
    <property type="term" value="P:cell adhesion"/>
    <property type="evidence" value="ECO:0007669"/>
    <property type="project" value="UniProtKB-KW"/>
</dbReference>
<dbReference type="GO" id="GO:0007399">
    <property type="term" value="P:nervous system development"/>
    <property type="evidence" value="ECO:0007669"/>
    <property type="project" value="UniProtKB-ARBA"/>
</dbReference>
<dbReference type="CDD" id="cd00057">
    <property type="entry name" value="FA58C"/>
    <property type="match status" value="1"/>
</dbReference>
<dbReference type="CDD" id="cd00112">
    <property type="entry name" value="LDLa"/>
    <property type="match status" value="12"/>
</dbReference>
<dbReference type="CDD" id="cd19941">
    <property type="entry name" value="TIL"/>
    <property type="match status" value="16"/>
</dbReference>
<dbReference type="FunFam" id="2.20.100.10:FF:000004">
    <property type="entry name" value="Adhesion G protein-coupled receptor B2"/>
    <property type="match status" value="1"/>
</dbReference>
<dbReference type="FunFam" id="2.10.25.10:FF:000055">
    <property type="entry name" value="alpha-tectorin isoform X1"/>
    <property type="match status" value="1"/>
</dbReference>
<dbReference type="FunFam" id="4.10.400.10:FF:000034">
    <property type="entry name" value="Low-density lipoprotein receptor-related protein 2"/>
    <property type="match status" value="1"/>
</dbReference>
<dbReference type="FunFam" id="2.10.25.10:FF:000217">
    <property type="entry name" value="SCO-spondin"/>
    <property type="match status" value="1"/>
</dbReference>
<dbReference type="FunFam" id="2.20.100.10:FF:000080">
    <property type="entry name" value="SCO-spondin"/>
    <property type="match status" value="2"/>
</dbReference>
<dbReference type="FunFam" id="2.20.100.10:FF:000001">
    <property type="entry name" value="semaphorin-5A isoform X1"/>
    <property type="match status" value="1"/>
</dbReference>
<dbReference type="FunFam" id="4.10.400.10:FF:000065">
    <property type="entry name" value="Transmembrane protease serine 7"/>
    <property type="match status" value="1"/>
</dbReference>
<dbReference type="FunFam" id="2.20.100.10:FF:000002">
    <property type="entry name" value="Unc-5 netrin receptor C"/>
    <property type="match status" value="2"/>
</dbReference>
<dbReference type="Gene3D" id="2.60.120.260">
    <property type="entry name" value="Galactose-binding domain-like"/>
    <property type="match status" value="1"/>
</dbReference>
<dbReference type="Gene3D" id="2.10.25.10">
    <property type="entry name" value="Laminin"/>
    <property type="match status" value="13"/>
</dbReference>
<dbReference type="Gene3D" id="4.10.400.10">
    <property type="entry name" value="Low-density Lipoprotein Receptor"/>
    <property type="match status" value="13"/>
</dbReference>
<dbReference type="Gene3D" id="2.20.100.10">
    <property type="entry name" value="Thrombospondin type-1 (TSP1) repeat"/>
    <property type="match status" value="24"/>
</dbReference>
<dbReference type="InterPro" id="IPR006207">
    <property type="entry name" value="Cys_knot_C"/>
</dbReference>
<dbReference type="InterPro" id="IPR000742">
    <property type="entry name" value="EGF-like_dom"/>
</dbReference>
<dbReference type="InterPro" id="IPR000421">
    <property type="entry name" value="FA58C"/>
</dbReference>
<dbReference type="InterPro" id="IPR008979">
    <property type="entry name" value="Galactose-bd-like_sf"/>
</dbReference>
<dbReference type="InterPro" id="IPR036055">
    <property type="entry name" value="LDL_receptor-like_sf"/>
</dbReference>
<dbReference type="InterPro" id="IPR023415">
    <property type="entry name" value="LDLR_class-A_CS"/>
</dbReference>
<dbReference type="InterPro" id="IPR002172">
    <property type="entry name" value="LDrepeatLR_classA_rpt"/>
</dbReference>
<dbReference type="InterPro" id="IPR050780">
    <property type="entry name" value="Mucin_vWF_Thrombospondin_sf"/>
</dbReference>
<dbReference type="InterPro" id="IPR036084">
    <property type="entry name" value="Ser_inhib-like_sf"/>
</dbReference>
<dbReference type="InterPro" id="IPR002919">
    <property type="entry name" value="TIL_dom"/>
</dbReference>
<dbReference type="InterPro" id="IPR000884">
    <property type="entry name" value="TSP1_rpt"/>
</dbReference>
<dbReference type="InterPro" id="IPR036383">
    <property type="entry name" value="TSP1_rpt_sf"/>
</dbReference>
<dbReference type="InterPro" id="IPR014853">
    <property type="entry name" value="VWF/SSPO/ZAN-like_Cys-rich_dom"/>
</dbReference>
<dbReference type="InterPro" id="IPR001007">
    <property type="entry name" value="VWF_dom"/>
</dbReference>
<dbReference type="InterPro" id="IPR001846">
    <property type="entry name" value="VWF_type-D"/>
</dbReference>
<dbReference type="PANTHER" id="PTHR11339">
    <property type="entry name" value="EXTRACELLULAR MATRIX GLYCOPROTEIN RELATED"/>
    <property type="match status" value="1"/>
</dbReference>
<dbReference type="PANTHER" id="PTHR11339:SF396">
    <property type="entry name" value="SCO-SPONDIN"/>
    <property type="match status" value="1"/>
</dbReference>
<dbReference type="Pfam" id="PF08742">
    <property type="entry name" value="C8"/>
    <property type="match status" value="3"/>
</dbReference>
<dbReference type="Pfam" id="PF00754">
    <property type="entry name" value="F5_F8_type_C"/>
    <property type="match status" value="1"/>
</dbReference>
<dbReference type="Pfam" id="PF00057">
    <property type="entry name" value="Ldl_recept_a"/>
    <property type="match status" value="12"/>
</dbReference>
<dbReference type="Pfam" id="PF01826">
    <property type="entry name" value="TIL"/>
    <property type="match status" value="12"/>
</dbReference>
<dbReference type="Pfam" id="PF00090">
    <property type="entry name" value="TSP_1"/>
    <property type="match status" value="25"/>
</dbReference>
<dbReference type="Pfam" id="PF00093">
    <property type="entry name" value="VWC"/>
    <property type="match status" value="1"/>
</dbReference>
<dbReference type="Pfam" id="PF00094">
    <property type="entry name" value="VWD"/>
    <property type="match status" value="3"/>
</dbReference>
<dbReference type="Pfam" id="PF23244">
    <property type="entry name" value="VWF"/>
    <property type="match status" value="1"/>
</dbReference>
<dbReference type="PRINTS" id="PR00261">
    <property type="entry name" value="LDLRECEPTOR"/>
</dbReference>
<dbReference type="SMART" id="SM00832">
    <property type="entry name" value="C8"/>
    <property type="match status" value="3"/>
</dbReference>
<dbReference type="SMART" id="SM00181">
    <property type="entry name" value="EGF"/>
    <property type="match status" value="9"/>
</dbReference>
<dbReference type="SMART" id="SM00231">
    <property type="entry name" value="FA58C"/>
    <property type="match status" value="1"/>
</dbReference>
<dbReference type="SMART" id="SM00192">
    <property type="entry name" value="LDLa"/>
    <property type="match status" value="13"/>
</dbReference>
<dbReference type="SMART" id="SM00209">
    <property type="entry name" value="TSP1"/>
    <property type="match status" value="27"/>
</dbReference>
<dbReference type="SMART" id="SM00214">
    <property type="entry name" value="VWC"/>
    <property type="match status" value="9"/>
</dbReference>
<dbReference type="SMART" id="SM00215">
    <property type="entry name" value="VWC_out"/>
    <property type="match status" value="11"/>
</dbReference>
<dbReference type="SMART" id="SM00216">
    <property type="entry name" value="VWD"/>
    <property type="match status" value="3"/>
</dbReference>
<dbReference type="SUPFAM" id="SSF57603">
    <property type="entry name" value="FnI-like domain"/>
    <property type="match status" value="5"/>
</dbReference>
<dbReference type="SUPFAM" id="SSF49785">
    <property type="entry name" value="Galactose-binding domain-like"/>
    <property type="match status" value="1"/>
</dbReference>
<dbReference type="SUPFAM" id="SSF57424">
    <property type="entry name" value="LDL receptor-like module"/>
    <property type="match status" value="12"/>
</dbReference>
<dbReference type="SUPFAM" id="SSF57567">
    <property type="entry name" value="Serine protease inhibitors"/>
    <property type="match status" value="15"/>
</dbReference>
<dbReference type="SUPFAM" id="SSF82895">
    <property type="entry name" value="TSP-1 type 1 repeat"/>
    <property type="match status" value="25"/>
</dbReference>
<dbReference type="PROSITE" id="PS01225">
    <property type="entry name" value="CTCK_2"/>
    <property type="match status" value="1"/>
</dbReference>
<dbReference type="PROSITE" id="PS01285">
    <property type="entry name" value="FA58C_1"/>
    <property type="match status" value="1"/>
</dbReference>
<dbReference type="PROSITE" id="PS01286">
    <property type="entry name" value="FA58C_2"/>
    <property type="match status" value="1"/>
</dbReference>
<dbReference type="PROSITE" id="PS50022">
    <property type="entry name" value="FA58C_3"/>
    <property type="match status" value="1"/>
</dbReference>
<dbReference type="PROSITE" id="PS01209">
    <property type="entry name" value="LDLRA_1"/>
    <property type="match status" value="11"/>
</dbReference>
<dbReference type="PROSITE" id="PS50068">
    <property type="entry name" value="LDLRA_2"/>
    <property type="match status" value="13"/>
</dbReference>
<dbReference type="PROSITE" id="PS50092">
    <property type="entry name" value="TSP1"/>
    <property type="match status" value="27"/>
</dbReference>
<dbReference type="PROSITE" id="PS01208">
    <property type="entry name" value="VWFC_1"/>
    <property type="match status" value="1"/>
</dbReference>
<dbReference type="PROSITE" id="PS50184">
    <property type="entry name" value="VWFC_2"/>
    <property type="match status" value="2"/>
</dbReference>
<dbReference type="PROSITE" id="PS51233">
    <property type="entry name" value="VWFD"/>
    <property type="match status" value="3"/>
</dbReference>
<gene>
    <name type="primary">SSPO</name>
</gene>
<proteinExistence type="evidence at transcript level"/>
<feature type="signal peptide" evidence="2">
    <location>
        <begin position="1"/>
        <end position="18"/>
    </location>
</feature>
<feature type="chain" id="PRO_0000245045" description="SCO-spondin">
    <location>
        <begin position="19"/>
        <end position="5255"/>
    </location>
</feature>
<feature type="domain" description="EMI">
    <location>
        <begin position="19"/>
        <end position="111"/>
    </location>
</feature>
<feature type="domain" description="VWFD 1" evidence="8">
    <location>
        <begin position="192"/>
        <end position="358"/>
    </location>
</feature>
<feature type="domain" description="TIL 1" evidence="2">
    <location>
        <begin position="453"/>
        <end position="508"/>
    </location>
</feature>
<feature type="domain" description="VWFC 1" evidence="7">
    <location>
        <begin position="508"/>
        <end position="601"/>
    </location>
</feature>
<feature type="domain" description="VWFD 2" evidence="8">
    <location>
        <begin position="546"/>
        <end position="717"/>
    </location>
</feature>
<feature type="domain" description="TIL 2" evidence="2">
    <location>
        <begin position="809"/>
        <end position="868"/>
    </location>
</feature>
<feature type="domain" description="VWFC 2" evidence="7">
    <location>
        <begin position="868"/>
        <end position="926"/>
    </location>
</feature>
<feature type="domain" description="VWFD 3" evidence="8">
    <location>
        <begin position="998"/>
        <end position="1168"/>
    </location>
</feature>
<feature type="domain" description="TIL 3" evidence="2">
    <location>
        <begin position="1263"/>
        <end position="1319"/>
    </location>
</feature>
<feature type="domain" description="LDL-receptor class A 1" evidence="5">
    <location>
        <begin position="1362"/>
        <end position="1398"/>
    </location>
</feature>
<feature type="domain" description="LDL-receptor class A 2" evidence="5">
    <location>
        <begin position="1400"/>
        <end position="1436"/>
    </location>
</feature>
<feature type="domain" description="LDL-receptor class A 3" evidence="5">
    <location>
        <begin position="1439"/>
        <end position="1477"/>
    </location>
</feature>
<feature type="domain" description="LDL-receptor class A 4" evidence="5">
    <location>
        <begin position="1479"/>
        <end position="1515"/>
    </location>
</feature>
<feature type="domain" description="LDL-receptor class A 5" evidence="5">
    <location>
        <begin position="1515"/>
        <end position="1551"/>
    </location>
</feature>
<feature type="domain" description="LDL-receptor class A 6" evidence="5">
    <location>
        <begin position="1555"/>
        <end position="1593"/>
    </location>
</feature>
<feature type="domain" description="LDL-receptor class A 7" evidence="5">
    <location>
        <begin position="1616"/>
        <end position="1652"/>
    </location>
</feature>
<feature type="domain" description="LDL-receptor class A 8" evidence="5">
    <location>
        <begin position="1654"/>
        <end position="1693"/>
    </location>
</feature>
<feature type="domain" description="LDL-receptor class A 9" evidence="5">
    <location>
        <begin position="1699"/>
        <end position="1734"/>
    </location>
</feature>
<feature type="domain" description="LDL-receptor class A 10" evidence="5">
    <location>
        <begin position="1748"/>
        <end position="1790"/>
    </location>
</feature>
<feature type="domain" description="TSP type-1 1" evidence="6">
    <location>
        <begin position="1789"/>
        <end position="1843"/>
    </location>
</feature>
<feature type="domain" description="TSP type-1 2" evidence="6">
    <location>
        <begin position="1845"/>
        <end position="1903"/>
    </location>
</feature>
<feature type="domain" description="TIL 4" evidence="2">
    <location>
        <begin position="1907"/>
        <end position="1961"/>
    </location>
</feature>
<feature type="domain" description="EGF-like 1">
    <location>
        <begin position="1919"/>
        <end position="1956"/>
    </location>
</feature>
<feature type="domain" description="EGF-like 2">
    <location>
        <begin position="1957"/>
        <end position="1983"/>
    </location>
</feature>
<feature type="domain" description="VWFC 3" evidence="7">
    <location>
        <begin position="1961"/>
        <end position="2019"/>
    </location>
</feature>
<feature type="domain" description="TSP type-1 3" evidence="6">
    <location>
        <begin position="2002"/>
        <end position="2058"/>
    </location>
</feature>
<feature type="domain" description="VWFC 4" evidence="7">
    <location>
        <begin position="2058"/>
        <end position="2120"/>
    </location>
</feature>
<feature type="domain" description="F5/8 type C" evidence="4">
    <location>
        <begin position="2162"/>
        <end position="2310"/>
    </location>
</feature>
<feature type="domain" description="LDL-receptor class A 11" evidence="5">
    <location>
        <begin position="2327"/>
        <end position="2362"/>
    </location>
</feature>
<feature type="domain" description="LDL-receptor class A 12" evidence="5">
    <location>
        <begin position="2481"/>
        <end position="2517"/>
    </location>
</feature>
<feature type="domain" description="LDL-receptor class A 13" evidence="5">
    <location>
        <begin position="2538"/>
        <end position="2574"/>
    </location>
</feature>
<feature type="domain" description="TSP type-1 4" evidence="6">
    <location>
        <begin position="2575"/>
        <end position="2628"/>
    </location>
</feature>
<feature type="domain" description="TSP type-1 5" evidence="6">
    <location>
        <begin position="2630"/>
        <end position="2685"/>
    </location>
</feature>
<feature type="domain" description="TIL 5" evidence="2">
    <location>
        <begin position="2708"/>
        <end position="2750"/>
    </location>
</feature>
<feature type="domain" description="TSP type-1 6" evidence="6">
    <location>
        <begin position="2790"/>
        <end position="2844"/>
    </location>
</feature>
<feature type="domain" description="TSP type-1 7" evidence="6">
    <location>
        <begin position="2849"/>
        <end position="2903"/>
    </location>
</feature>
<feature type="domain" description="TSP type-1 8" evidence="6">
    <location>
        <begin position="2905"/>
        <end position="2958"/>
    </location>
</feature>
<feature type="domain" description="TIL 6" evidence="2">
    <location>
        <begin position="2971"/>
        <end position="3020"/>
    </location>
</feature>
<feature type="domain" description="VWFC 5" evidence="7">
    <location>
        <begin position="3020"/>
        <end position="3077"/>
    </location>
</feature>
<feature type="domain" description="TSP type-1 9" evidence="6">
    <location>
        <begin position="3060"/>
        <end position="3115"/>
    </location>
</feature>
<feature type="domain" description="TSP type-1 10" evidence="6">
    <location>
        <begin position="3117"/>
        <end position="3158"/>
    </location>
</feature>
<feature type="domain" description="TIL 7" evidence="2">
    <location>
        <begin position="3165"/>
        <end position="3217"/>
    </location>
</feature>
<feature type="domain" description="VWFC 6" evidence="7">
    <location>
        <begin position="3217"/>
        <end position="3275"/>
    </location>
</feature>
<feature type="domain" description="TSP type-1 11" evidence="6">
    <location>
        <begin position="3258"/>
        <end position="3309"/>
    </location>
</feature>
<feature type="domain" description="TSP type-1 12" evidence="6">
    <location>
        <begin position="3410"/>
        <end position="3475"/>
    </location>
</feature>
<feature type="domain" description="TSP type-1 13" evidence="6">
    <location>
        <begin position="3477"/>
        <end position="3532"/>
    </location>
</feature>
<feature type="domain" description="TIL 8" evidence="2">
    <location>
        <begin position="3534"/>
        <end position="3589"/>
    </location>
</feature>
<feature type="domain" description="TSP type-1 14" evidence="6">
    <location>
        <begin position="3644"/>
        <end position="3700"/>
    </location>
</feature>
<feature type="domain" description="TSP type-1 15" evidence="6">
    <location>
        <begin position="3702"/>
        <end position="3751"/>
    </location>
</feature>
<feature type="domain" description="TSP type-1 16" evidence="6">
    <location>
        <begin position="3878"/>
        <end position="3934"/>
    </location>
</feature>
<feature type="domain" description="TSP type-1 17" evidence="6">
    <location>
        <begin position="3951"/>
        <end position="4004"/>
    </location>
</feature>
<feature type="domain" description="TSP type-1 18" evidence="6">
    <location>
        <begin position="4018"/>
        <end position="4074"/>
    </location>
</feature>
<feature type="domain" description="TSP type-1 19" evidence="6">
    <location>
        <begin position="4076"/>
        <end position="4131"/>
    </location>
</feature>
<feature type="domain" description="TIL 9" evidence="2">
    <location>
        <begin position="4134"/>
        <end position="4189"/>
    </location>
</feature>
<feature type="domain" description="TSP type-1 20" evidence="6">
    <location>
        <begin position="4230"/>
        <end position="4282"/>
    </location>
</feature>
<feature type="domain" description="TSP type-1 21" evidence="6">
    <location>
        <begin position="4322"/>
        <end position="4384"/>
    </location>
</feature>
<feature type="domain" description="TSP type-1 22" evidence="6">
    <location>
        <begin position="4386"/>
        <end position="4433"/>
    </location>
</feature>
<feature type="domain" description="TIL 10" evidence="2">
    <location>
        <begin position="4437"/>
        <end position="4492"/>
    </location>
</feature>
<feature type="domain" description="TSP type-1 23" evidence="6">
    <location>
        <begin position="4537"/>
        <end position="4608"/>
    </location>
</feature>
<feature type="domain" description="TSP type-1 24" evidence="6">
    <location>
        <begin position="4610"/>
        <end position="4662"/>
    </location>
</feature>
<feature type="domain" description="TIL 11" evidence="2">
    <location>
        <begin position="4675"/>
        <end position="4722"/>
    </location>
</feature>
<feature type="domain" description="TSP type-1 25" evidence="6">
    <location>
        <begin position="4762"/>
        <end position="4815"/>
    </location>
</feature>
<feature type="domain" description="TSP type-1 26" evidence="6">
    <location>
        <begin position="4817"/>
        <end position="4869"/>
    </location>
</feature>
<feature type="domain" description="TIL 12" evidence="2">
    <location>
        <begin position="4872"/>
        <end position="4926"/>
    </location>
</feature>
<feature type="domain" description="TSP type-1 27" evidence="6">
    <location>
        <begin position="4979"/>
        <end position="5033"/>
    </location>
</feature>
<feature type="domain" description="VWFC 7" evidence="7">
    <location>
        <begin position="5092"/>
        <end position="5150"/>
    </location>
</feature>
<feature type="domain" description="CTCK" evidence="3">
    <location>
        <begin position="5161"/>
        <end position="5248"/>
    </location>
</feature>
<feature type="region of interest" description="Disordered" evidence="9">
    <location>
        <begin position="2352"/>
        <end position="2373"/>
    </location>
</feature>
<feature type="region of interest" description="Disordered" evidence="9">
    <location>
        <begin position="3932"/>
        <end position="3951"/>
    </location>
</feature>
<feature type="compositionally biased region" description="Polar residues" evidence="9">
    <location>
        <begin position="2364"/>
        <end position="2373"/>
    </location>
</feature>
<feature type="glycosylation site" description="N-linked (GlcNAc...) asparagine" evidence="2">
    <location>
        <position position="97"/>
    </location>
</feature>
<feature type="glycosylation site" description="N-linked (GlcNAc...) asparagine" evidence="2">
    <location>
        <position position="136"/>
    </location>
</feature>
<feature type="glycosylation site" description="N-linked (GlcNAc...) asparagine" evidence="2">
    <location>
        <position position="156"/>
    </location>
</feature>
<feature type="glycosylation site" description="N-linked (GlcNAc...) asparagine" evidence="2">
    <location>
        <position position="255"/>
    </location>
</feature>
<feature type="glycosylation site" description="N-linked (GlcNAc...) asparagine" evidence="2">
    <location>
        <position position="801"/>
    </location>
</feature>
<feature type="glycosylation site" description="N-linked (GlcNAc...) asparagine" evidence="2">
    <location>
        <position position="931"/>
    </location>
</feature>
<feature type="glycosylation site" description="N-linked (GlcNAc...) asparagine" evidence="2">
    <location>
        <position position="972"/>
    </location>
</feature>
<feature type="glycosylation site" description="N-linked (GlcNAc...) asparagine" evidence="2">
    <location>
        <position position="1340"/>
    </location>
</feature>
<feature type="glycosylation site" description="N-linked (GlcNAc...) asparagine" evidence="2">
    <location>
        <position position="1610"/>
    </location>
</feature>
<feature type="glycosylation site" description="N-linked (GlcNAc...) asparagine" evidence="2">
    <location>
        <position position="1652"/>
    </location>
</feature>
<feature type="glycosylation site" description="N-linked (GlcNAc...) asparagine" evidence="2">
    <location>
        <position position="1713"/>
    </location>
</feature>
<feature type="glycosylation site" description="N-linked (GlcNAc...) asparagine" evidence="2">
    <location>
        <position position="1743"/>
    </location>
</feature>
<feature type="glycosylation site" description="N-linked (GlcNAc...) asparagine" evidence="2">
    <location>
        <position position="1856"/>
    </location>
</feature>
<feature type="glycosylation site" description="N-linked (GlcNAc...) asparagine" evidence="2">
    <location>
        <position position="2125"/>
    </location>
</feature>
<feature type="glycosylation site" description="N-linked (GlcNAc...) asparagine" evidence="2">
    <location>
        <position position="2230"/>
    </location>
</feature>
<feature type="glycosylation site" description="N-linked (GlcNAc...) asparagine" evidence="2">
    <location>
        <position position="2746"/>
    </location>
</feature>
<feature type="glycosylation site" description="N-linked (GlcNAc...) asparagine" evidence="2">
    <location>
        <position position="3011"/>
    </location>
</feature>
<feature type="glycosylation site" description="N-linked (GlcNAc...) asparagine" evidence="2">
    <location>
        <position position="3042"/>
    </location>
</feature>
<feature type="glycosylation site" description="N-linked (GlcNAc...) asparagine" evidence="2">
    <location>
        <position position="3065"/>
    </location>
</feature>
<feature type="glycosylation site" description="N-linked (GlcNAc...) asparagine" evidence="2">
    <location>
        <position position="3136"/>
    </location>
</feature>
<feature type="glycosylation site" description="N-linked (GlcNAc...) asparagine" evidence="2">
    <location>
        <position position="3238"/>
    </location>
</feature>
<feature type="glycosylation site" description="N-linked (GlcNAc...) asparagine" evidence="2">
    <location>
        <position position="3248"/>
    </location>
</feature>
<feature type="glycosylation site" description="N-linked (GlcNAc...) asparagine" evidence="2">
    <location>
        <position position="3350"/>
    </location>
</feature>
<feature type="glycosylation site" description="N-linked (GlcNAc...) asparagine" evidence="2">
    <location>
        <position position="3366"/>
    </location>
</feature>
<feature type="glycosylation site" description="N-linked (GlcNAc...) asparagine" evidence="2">
    <location>
        <position position="3392"/>
    </location>
</feature>
<feature type="glycosylation site" description="N-linked (GlcNAc...) asparagine" evidence="2">
    <location>
        <position position="3598"/>
    </location>
</feature>
<feature type="glycosylation site" description="N-linked (GlcNAc...) asparagine" evidence="2">
    <location>
        <position position="3625"/>
    </location>
</feature>
<feature type="glycosylation site" description="N-linked (GlcNAc...) asparagine" evidence="2">
    <location>
        <position position="3823"/>
    </location>
</feature>
<feature type="glycosylation site" description="N-linked (GlcNAc...) asparagine" evidence="2">
    <location>
        <position position="3869"/>
    </location>
</feature>
<feature type="glycosylation site" description="N-linked (GlcNAc...) asparagine" evidence="2">
    <location>
        <position position="4018"/>
    </location>
</feature>
<feature type="glycosylation site" description="N-linked (GlcNAc...) asparagine" evidence="2">
    <location>
        <position position="4174"/>
    </location>
</feature>
<feature type="glycosylation site" description="N-linked (GlcNAc...) asparagine" evidence="2">
    <location>
        <position position="4211"/>
    </location>
</feature>
<feature type="glycosylation site" description="N-linked (GlcNAc...) asparagine" evidence="2">
    <location>
        <position position="4362"/>
    </location>
</feature>
<feature type="glycosylation site" description="N-linked (GlcNAc...) asparagine" evidence="2">
    <location>
        <position position="4428"/>
    </location>
</feature>
<feature type="glycosylation site" description="N-linked (GlcNAc...) asparagine" evidence="2">
    <location>
        <position position="4498"/>
    </location>
</feature>
<feature type="glycosylation site" description="N-linked (GlcNAc...) asparagine" evidence="2">
    <location>
        <position position="4730"/>
    </location>
</feature>
<feature type="glycosylation site" description="N-linked (GlcNAc...) asparagine" evidence="2">
    <location>
        <position position="4747"/>
    </location>
</feature>
<feature type="glycosylation site" description="N-linked (GlcNAc...) asparagine" evidence="2">
    <location>
        <position position="4752"/>
    </location>
</feature>
<feature type="glycosylation site" description="N-linked (GlcNAc...) asparagine" evidence="2">
    <location>
        <position position="4867"/>
    </location>
</feature>
<feature type="glycosylation site" description="N-linked (GlcNAc...) asparagine" evidence="2">
    <location>
        <position position="4939"/>
    </location>
</feature>
<feature type="glycosylation site" description="N-linked (GlcNAc...) asparagine" evidence="2">
    <location>
        <position position="4970"/>
    </location>
</feature>
<feature type="glycosylation site" description="N-linked (GlcNAc...) asparagine" evidence="2">
    <location>
        <position position="5081"/>
    </location>
</feature>
<feature type="glycosylation site" description="N-linked (GlcNAc...) asparagine" evidence="2">
    <location>
        <position position="5122"/>
    </location>
</feature>
<feature type="glycosylation site" description="N-linked (GlcNAc...) asparagine" evidence="2">
    <location>
        <position position="5169"/>
    </location>
</feature>
<feature type="disulfide bond" evidence="8">
    <location>
        <begin position="194"/>
        <end position="317"/>
    </location>
</feature>
<feature type="disulfide bond" evidence="8">
    <location>
        <begin position="216"/>
        <end position="357"/>
    </location>
</feature>
<feature type="disulfide bond" evidence="8">
    <location>
        <begin position="548"/>
        <end position="681"/>
    </location>
</feature>
<feature type="disulfide bond" evidence="8">
    <location>
        <begin position="570"/>
        <end position="716"/>
    </location>
</feature>
<feature type="disulfide bond" evidence="8">
    <location>
        <begin position="592"/>
        <end position="600"/>
    </location>
</feature>
<feature type="disulfide bond" evidence="8">
    <location>
        <begin position="1000"/>
        <end position="1132"/>
    </location>
</feature>
<feature type="disulfide bond" evidence="8">
    <location>
        <begin position="1022"/>
        <end position="1167"/>
    </location>
</feature>
<feature type="disulfide bond" evidence="8">
    <location>
        <begin position="1043"/>
        <end position="1050"/>
    </location>
</feature>
<feature type="disulfide bond" evidence="5">
    <location>
        <begin position="1363"/>
        <end position="1376"/>
    </location>
</feature>
<feature type="disulfide bond" evidence="5">
    <location>
        <begin position="1370"/>
        <end position="1389"/>
    </location>
</feature>
<feature type="disulfide bond" evidence="5">
    <location>
        <begin position="1383"/>
        <end position="1397"/>
    </location>
</feature>
<feature type="disulfide bond" evidence="5">
    <location>
        <begin position="1401"/>
        <end position="1413"/>
    </location>
</feature>
<feature type="disulfide bond" evidence="5">
    <location>
        <begin position="1408"/>
        <end position="1426"/>
    </location>
</feature>
<feature type="disulfide bond" evidence="5">
    <location>
        <begin position="1420"/>
        <end position="1435"/>
    </location>
</feature>
<feature type="disulfide bond" evidence="5">
    <location>
        <begin position="1440"/>
        <end position="1452"/>
    </location>
</feature>
<feature type="disulfide bond" evidence="5">
    <location>
        <begin position="1447"/>
        <end position="1465"/>
    </location>
</feature>
<feature type="disulfide bond" evidence="5">
    <location>
        <begin position="1459"/>
        <end position="1476"/>
    </location>
</feature>
<feature type="disulfide bond" evidence="5">
    <location>
        <begin position="1480"/>
        <end position="1492"/>
    </location>
</feature>
<feature type="disulfide bond" evidence="5">
    <location>
        <begin position="1487"/>
        <end position="1505"/>
    </location>
</feature>
<feature type="disulfide bond" evidence="5">
    <location>
        <begin position="1499"/>
        <end position="1514"/>
    </location>
</feature>
<feature type="disulfide bond" evidence="5">
    <location>
        <begin position="1516"/>
        <end position="1528"/>
    </location>
</feature>
<feature type="disulfide bond" evidence="5">
    <location>
        <begin position="1523"/>
        <end position="1541"/>
    </location>
</feature>
<feature type="disulfide bond" evidence="5">
    <location>
        <begin position="1535"/>
        <end position="1550"/>
    </location>
</feature>
<feature type="disulfide bond" evidence="5">
    <location>
        <begin position="1556"/>
        <end position="1568"/>
    </location>
</feature>
<feature type="disulfide bond" evidence="5">
    <location>
        <begin position="1563"/>
        <end position="1581"/>
    </location>
</feature>
<feature type="disulfide bond" evidence="5">
    <location>
        <begin position="1575"/>
        <end position="1592"/>
    </location>
</feature>
<feature type="disulfide bond" evidence="5">
    <location>
        <begin position="1617"/>
        <end position="1629"/>
    </location>
</feature>
<feature type="disulfide bond" evidence="5">
    <location>
        <begin position="1624"/>
        <end position="1642"/>
    </location>
</feature>
<feature type="disulfide bond" evidence="5">
    <location>
        <begin position="1636"/>
        <end position="1651"/>
    </location>
</feature>
<feature type="disulfide bond" evidence="5">
    <location>
        <begin position="1655"/>
        <end position="1668"/>
    </location>
</feature>
<feature type="disulfide bond" evidence="5">
    <location>
        <begin position="1662"/>
        <end position="1681"/>
    </location>
</feature>
<feature type="disulfide bond" evidence="5">
    <location>
        <begin position="1675"/>
        <end position="1692"/>
    </location>
</feature>
<feature type="disulfide bond" evidence="5">
    <location>
        <begin position="1700"/>
        <end position="1711"/>
    </location>
</feature>
<feature type="disulfide bond" evidence="5">
    <location>
        <begin position="1706"/>
        <end position="1724"/>
    </location>
</feature>
<feature type="disulfide bond" evidence="5">
    <location>
        <begin position="1718"/>
        <end position="1733"/>
    </location>
</feature>
<feature type="disulfide bond" evidence="5">
    <location>
        <begin position="1749"/>
        <end position="1759"/>
    </location>
</feature>
<feature type="disulfide bond" evidence="5">
    <location>
        <begin position="1754"/>
        <end position="1772"/>
    </location>
</feature>
<feature type="disulfide bond" evidence="5">
    <location>
        <begin position="1766"/>
        <end position="1789"/>
    </location>
</feature>
<feature type="disulfide bond" evidence="6">
    <location>
        <begin position="1801"/>
        <end position="1837"/>
    </location>
</feature>
<feature type="disulfide bond" evidence="6">
    <location>
        <begin position="1805"/>
        <end position="1842"/>
    </location>
</feature>
<feature type="disulfide bond" evidence="6">
    <location>
        <begin position="1816"/>
        <end position="1827"/>
    </location>
</feature>
<feature type="disulfide bond" evidence="6">
    <location>
        <begin position="1857"/>
        <end position="1897"/>
    </location>
</feature>
<feature type="disulfide bond" evidence="6">
    <location>
        <begin position="1861"/>
        <end position="1902"/>
    </location>
</feature>
<feature type="disulfide bond" evidence="6">
    <location>
        <begin position="1871"/>
        <end position="1881"/>
    </location>
</feature>
<feature type="disulfide bond" evidence="6">
    <location>
        <begin position="2003"/>
        <end position="2042"/>
    </location>
</feature>
<feature type="disulfide bond" evidence="6">
    <location>
        <begin position="2014"/>
        <end position="2018"/>
    </location>
</feature>
<feature type="disulfide bond" evidence="6">
    <location>
        <begin position="2052"/>
        <end position="2057"/>
    </location>
</feature>
<feature type="disulfide bond" evidence="4">
    <location>
        <begin position="2162"/>
        <end position="2310"/>
    </location>
</feature>
<feature type="disulfide bond" evidence="5">
    <location>
        <begin position="2328"/>
        <end position="2339"/>
    </location>
</feature>
<feature type="disulfide bond" evidence="5">
    <location>
        <begin position="2335"/>
        <end position="2352"/>
    </location>
</feature>
<feature type="disulfide bond" evidence="5">
    <location>
        <begin position="2346"/>
        <end position="2361"/>
    </location>
</feature>
<feature type="disulfide bond" evidence="5">
    <location>
        <begin position="2482"/>
        <end position="2494"/>
    </location>
</feature>
<feature type="disulfide bond" evidence="5">
    <location>
        <begin position="2489"/>
        <end position="2507"/>
    </location>
</feature>
<feature type="disulfide bond" evidence="5">
    <location>
        <begin position="2501"/>
        <end position="2516"/>
    </location>
</feature>
<feature type="disulfide bond" evidence="5">
    <location>
        <begin position="2539"/>
        <end position="2551"/>
    </location>
</feature>
<feature type="disulfide bond" evidence="5">
    <location>
        <begin position="2546"/>
        <end position="2564"/>
    </location>
</feature>
<feature type="disulfide bond" evidence="5">
    <location>
        <begin position="2558"/>
        <end position="2573"/>
    </location>
</feature>
<feature type="disulfide bond" evidence="6">
    <location>
        <begin position="2576"/>
        <end position="2612"/>
    </location>
</feature>
<feature type="disulfide bond" evidence="6">
    <location>
        <begin position="2587"/>
        <end position="2591"/>
    </location>
</feature>
<feature type="disulfide bond" evidence="6">
    <location>
        <begin position="2622"/>
        <end position="2627"/>
    </location>
</feature>
<feature type="disulfide bond" evidence="6">
    <location>
        <begin position="2642"/>
        <end position="2679"/>
    </location>
</feature>
<feature type="disulfide bond" evidence="6">
    <location>
        <begin position="2646"/>
        <end position="2684"/>
    </location>
</feature>
<feature type="disulfide bond" evidence="6">
    <location>
        <begin position="2657"/>
        <end position="2669"/>
    </location>
</feature>
<feature type="disulfide bond" evidence="6">
    <location>
        <begin position="2791"/>
        <end position="2829"/>
    </location>
</feature>
<feature type="disulfide bond" evidence="6">
    <location>
        <begin position="2802"/>
        <end position="2806"/>
    </location>
</feature>
<feature type="disulfide bond" evidence="6">
    <location>
        <begin position="2839"/>
        <end position="2843"/>
    </location>
</feature>
<feature type="disulfide bond" evidence="6">
    <location>
        <begin position="2861"/>
        <end position="2897"/>
    </location>
</feature>
<feature type="disulfide bond" evidence="6">
    <location>
        <begin position="2865"/>
        <end position="2902"/>
    </location>
</feature>
<feature type="disulfide bond" evidence="6">
    <location>
        <begin position="2881"/>
        <end position="2887"/>
    </location>
</feature>
<feature type="disulfide bond" evidence="6">
    <location>
        <begin position="2917"/>
        <end position="2952"/>
    </location>
</feature>
<feature type="disulfide bond" evidence="6">
    <location>
        <begin position="2921"/>
        <end position="2957"/>
    </location>
</feature>
<feature type="disulfide bond" evidence="6">
    <location>
        <begin position="2932"/>
        <end position="2942"/>
    </location>
</feature>
<feature type="disulfide bond" evidence="6">
    <location>
        <begin position="3061"/>
        <end position="3099"/>
    </location>
</feature>
<feature type="disulfide bond" evidence="6">
    <location>
        <begin position="3072"/>
        <end position="3076"/>
    </location>
</feature>
<feature type="disulfide bond" evidence="6">
    <location>
        <begin position="3109"/>
        <end position="3114"/>
    </location>
</feature>
<feature type="disulfide bond" evidence="6">
    <location>
        <begin position="3270"/>
        <end position="3303"/>
    </location>
</feature>
<feature type="disulfide bond" evidence="6">
    <location>
        <begin position="3274"/>
        <end position="3308"/>
    </location>
</feature>
<feature type="disulfide bond" evidence="6">
    <location>
        <begin position="3285"/>
        <end position="3293"/>
    </location>
</feature>
<feature type="disulfide bond" evidence="6">
    <location>
        <begin position="3422"/>
        <end position="3468"/>
    </location>
</feature>
<feature type="disulfide bond" evidence="6">
    <location>
        <begin position="3426"/>
        <end position="3474"/>
    </location>
</feature>
<feature type="disulfide bond" evidence="6">
    <location>
        <begin position="3437"/>
        <end position="3449"/>
    </location>
</feature>
<feature type="disulfide bond" evidence="6">
    <location>
        <begin position="3489"/>
        <end position="3524"/>
    </location>
</feature>
<feature type="disulfide bond" evidence="6">
    <location>
        <begin position="3492"/>
        <end position="3531"/>
    </location>
</feature>
<feature type="disulfide bond" evidence="6">
    <location>
        <begin position="3502"/>
        <end position="3514"/>
    </location>
</feature>
<feature type="disulfide bond" evidence="6">
    <location>
        <begin position="3656"/>
        <end position="3693"/>
    </location>
</feature>
<feature type="disulfide bond" evidence="6">
    <location>
        <begin position="3660"/>
        <end position="3699"/>
    </location>
</feature>
<feature type="disulfide bond" evidence="6">
    <location>
        <begin position="3671"/>
        <end position="3683"/>
    </location>
</feature>
<feature type="disulfide bond" evidence="6">
    <location>
        <begin position="3714"/>
        <end position="3745"/>
    </location>
</feature>
<feature type="disulfide bond" evidence="6">
    <location>
        <begin position="3718"/>
        <end position="3750"/>
    </location>
</feature>
<feature type="disulfide bond" evidence="6">
    <location>
        <begin position="3729"/>
        <end position="3735"/>
    </location>
</feature>
<feature type="disulfide bond" evidence="6">
    <location>
        <begin position="3890"/>
        <end position="3928"/>
    </location>
</feature>
<feature type="disulfide bond" evidence="6">
    <location>
        <begin position="3894"/>
        <end position="3933"/>
    </location>
</feature>
<feature type="disulfide bond" evidence="6">
    <location>
        <begin position="3906"/>
        <end position="3918"/>
    </location>
</feature>
<feature type="disulfide bond" evidence="6">
    <location>
        <begin position="3963"/>
        <end position="3998"/>
    </location>
</feature>
<feature type="disulfide bond" evidence="6">
    <location>
        <begin position="3967"/>
        <end position="4003"/>
    </location>
</feature>
<feature type="disulfide bond" evidence="6">
    <location>
        <begin position="3982"/>
        <end position="3988"/>
    </location>
</feature>
<feature type="disulfide bond" evidence="6">
    <location>
        <begin position="4019"/>
        <end position="4055"/>
    </location>
</feature>
<feature type="disulfide bond" evidence="6">
    <location>
        <begin position="4030"/>
        <end position="4034"/>
    </location>
</feature>
<feature type="disulfide bond" evidence="6">
    <location>
        <begin position="4068"/>
        <end position="4073"/>
    </location>
</feature>
<feature type="disulfide bond" evidence="6">
    <location>
        <begin position="4088"/>
        <end position="4125"/>
    </location>
</feature>
<feature type="disulfide bond" evidence="6">
    <location>
        <begin position="4092"/>
        <end position="4130"/>
    </location>
</feature>
<feature type="disulfide bond" evidence="6">
    <location>
        <begin position="4103"/>
        <end position="4115"/>
    </location>
</feature>
<feature type="disulfide bond" evidence="6">
    <location>
        <begin position="4231"/>
        <end position="4266"/>
    </location>
</feature>
<feature type="disulfide bond" evidence="6">
    <location>
        <begin position="4242"/>
        <end position="4246"/>
    </location>
</feature>
<feature type="disulfide bond" evidence="6">
    <location>
        <begin position="4276"/>
        <end position="4281"/>
    </location>
</feature>
<feature type="disulfide bond" evidence="6">
    <location>
        <begin position="4387"/>
        <end position="4417"/>
    </location>
</feature>
<feature type="disulfide bond" evidence="6">
    <location>
        <begin position="4398"/>
        <end position="4400"/>
    </location>
</feature>
<feature type="disulfide bond" evidence="6">
    <location>
        <begin position="4427"/>
        <end position="4432"/>
    </location>
</feature>
<feature type="disulfide bond" evidence="6">
    <location>
        <begin position="4548"/>
        <end position="4601"/>
    </location>
</feature>
<feature type="disulfide bond" evidence="6">
    <location>
        <begin position="4551"/>
        <end position="4607"/>
    </location>
</feature>
<feature type="disulfide bond" evidence="6">
    <location>
        <begin position="4575"/>
        <end position="4591"/>
    </location>
</feature>
<feature type="disulfide bond" evidence="6">
    <location>
        <begin position="4611"/>
        <end position="4646"/>
    </location>
</feature>
<feature type="disulfide bond" evidence="6">
    <location>
        <begin position="4622"/>
        <end position="4626"/>
    </location>
</feature>
<feature type="disulfide bond" evidence="6">
    <location>
        <begin position="4656"/>
        <end position="4661"/>
    </location>
</feature>
<feature type="disulfide bond" evidence="6">
    <location>
        <begin position="4774"/>
        <end position="4809"/>
    </location>
</feature>
<feature type="disulfide bond" evidence="6">
    <location>
        <begin position="4778"/>
        <end position="4814"/>
    </location>
</feature>
<feature type="disulfide bond" evidence="6">
    <location>
        <begin position="4789"/>
        <end position="4798"/>
    </location>
</feature>
<feature type="disulfide bond" evidence="6">
    <location>
        <begin position="4818"/>
        <end position="4852"/>
    </location>
</feature>
<feature type="disulfide bond" evidence="6">
    <location>
        <begin position="4829"/>
        <end position="4833"/>
    </location>
</feature>
<feature type="disulfide bond" evidence="6">
    <location>
        <begin position="4863"/>
        <end position="4868"/>
    </location>
</feature>
<feature type="disulfide bond" evidence="6">
    <location>
        <begin position="4980"/>
        <end position="5017"/>
    </location>
</feature>
<feature type="disulfide bond" evidence="6">
    <location>
        <begin position="4991"/>
        <end position="4995"/>
    </location>
</feature>
<feature type="disulfide bond" evidence="6">
    <location>
        <begin position="5027"/>
        <end position="5032"/>
    </location>
</feature>
<feature type="disulfide bond" evidence="3">
    <location>
        <begin position="5161"/>
        <end position="5209"/>
    </location>
</feature>
<feature type="disulfide bond" evidence="3">
    <location>
        <begin position="5175"/>
        <end position="5226"/>
    </location>
</feature>
<feature type="disulfide bond" evidence="3">
    <location>
        <begin position="5185"/>
        <end position="5242"/>
    </location>
</feature>
<feature type="disulfide bond" evidence="3">
    <location>
        <begin position="5189"/>
        <end position="5244"/>
    </location>
</feature>
<reference key="1">
    <citation type="submission" date="2004-11" db="EMBL/GenBank/DDBJ databases">
        <title>Characterization of SCO-spondin in chick embryos.</title>
        <authorList>
            <person name="Didier R."/>
        </authorList>
    </citation>
    <scope>NUCLEOTIDE SEQUENCE [MRNA]</scope>
    <source>
        <tissue>CNS</tissue>
    </source>
</reference>
<sequence>MGIVATVLLWVVTEAARGRWCERTEQVTEEEVVMPRREDVVPCPSMYQYSLAGWRIDLNRMRQVYGGERGVPPTSTHPGAAMCYIYRPPETQLVVRNRTVRACCAGWSGPHCTEVEGSLGQCHASWQCQDALGAHNLSTVSMAECCRQPWGHSWRNGSSALCFACSRQPLTGDVPLPTAPRGPAARHRGPTASCTVWAGSRYRSFDGRHFGFQGECAYSLAASTDSTWAVSITPGSPPVLHMTFGLDTVVAQGHNISVNGVAVPEGRQHLHGGISVTWLGDFVAVESGLGVHLKLDGRGTVYVTVSAELRGSTKGLCGPYNDDPIDDFLRVEGDVAPLAASFGNSWRIPDANPELSCSDAVEPSPGCAMGSTAQRAAEAMCGMLLTDPFRQCHEAVDPHGFYEACLELHCREGGTGPSPPPAVCDTLATYVRDCAQRRAYIEWRRPGLCEQQCGHGQRYSDCVSSCPASCMAAGTAEEGHCRDDCASGCECTPGLLLDRGACIPQSACPCLHRGHIYAPGQSIRQRCNQCTCRGGRWLCTQDRCAAECAVLGDLHYITFDRRRFSFPGACEYTLVQDFVEGTLRITAEQEACGGHQPLSCLRALSITVPGASARLHSTGEVVVDGRVVPLPFASAALTVRRASSSFLLLQTFGAHLLWGLETPAAYITLQPAFANKVRGLCGTYNWDQRDDFATPAGDVEVGVTAFANKYRVSTDCPVLSPVPFEPCSTYAPRRELAAAACAILHGASFQPCHHLVDREPFHQLCLYDVCACPAGKHCLCPALAAYARECAQEGAALSWRNESFCGTQCRGGQVYQECSSPCGRTCADLRLDGASSCPSLDNICVSGCNCPEGPVLDDGGQCVPPGVCPCQHSSQLYPAGSKIRQGCNACMCTAGTWSCTDAPCPDAAFCPGDLVYVFGSCLRTCDSAEPNGTCTGIADGCVCPPGTVFLDERCVPPEECPCQHNGRLYHPNDTIVRDCNTCVCRQQRWQCSSEDCMGTCVATGDPHYITFDGRAFSFLGDCEYVLVREANGLFTVTAENVPCGTSGVTCTKSVVVEMGNTVVHMLRGRDVTVNGVSVRPPKVYSGNGLTLQRAGIFLLLLSRLGLAVLWDGGTRVYIRLQPQHRGRVVGLCGNFDRDAENDLASQQGVLEPTAELFGNSWRVSLLCPEVDGTTAQHPCTDNPHRATWARKRCSILTQRLFAPCHDEVPCQHFYDWCIFDACGCDSGGDCECLCTAIATYAEECSQRGIHIRWRSQDLCPMQCDGGQEYSACGPPCPQTCRNLGLELPEHCDTMSCLEGCFCPEGKVLHEGSCIDPAECPCFWQGIAFPDSAVVQQGCRNCSCTAGLWQCVPTAEPCPAQPHCPDSEFPCRSGGRCVPGAWLCDNEDDCGDGSDEVCALHCAPHQHRCADGQCVPWGARCDGLSDCGDGSDERGCPPPPCAPPEFRCASGRCIPRAHVCNGELDCGFADDSDEAGCSPSCSVGEFQCAAGRCVPYPHRCNGHDDCGDFSDERGCVCPAGHFQCPDAQCLPPAALCDGMQDCGDGTDEAFCPDRITCAPGQLPCPDGSCVSQVKLCDGIWDCRDGWDESSVRCMVSWAPPAPTQLPTVPANGTAAPVCGPYEFPCRSGQCVPRGWVCDSEADCPDNSDELGCNRSCVLGHFPCALGAHCIHYDHLCDGIPHCPDHSDESDDNCGSTQIPPCPGHFVCNNRVCVNATRVCDGALDCPQGEDELACEGYVPTGERNQTVGPCAEYSCRDGDCITFKQVCNGLPDCRDGDMASGWLPSDEWDCGQWGPWAPWGICSHSCGLGQQLRARECSQRTPGVLHQCHGEATQARPCFSTACPVDGAWSEWTMWSNCTQGCEGVVVRQRHCQPPRDGGRPCAALPATAHATLEIGTCQQDGCPPASCPGGLQPRPCAPCPASCADLASRAPCRREQCTPGCWCAEGLVLDGERGCVRPRECRCEVDGLRYWPGQRMKLNCRLCTCLDGQPRRCRHNPACSVSCSWSAWSPWGECLGPCGVQSIQWSFRSPSHPGKHGTNRQCRGIYRKARRCQTEPCQECEHQGRSRAQGDRWRWGPCHVCQCLPGPEVRCSPYCARSAVGCPQGQVLVEGKGDSCCFCAQIGDNVTAIPTALTMEPPSTMPGEPSDSPLPTFPLPSPGDPCYSPLGIASLPDSSFTASAEQQQHPARAARLHHVSPGLELQGWAPPADTVPGLPSHLPFLQLDLLQTTNLTGVVVQGAGAGDAFITAFQLQFSTDGNRWHNYQQLFQGNWDATTPVVQPLDHMVQARYIRILPQGFHNAIFLRAELLGCPTVPLDLAVTTAVTPAPCGTGEFWCGVSCVTASRRCDGATDCPGGADEAGCEPPSSTTLPTHPASLTTPGSAGILGLTAEPPVAPPAAVPEGTSAWLTVGSTSPAVPSTTGLPGVPTATITPRGPPSAGPPSPGMAAVTVSHPVMGPPALPMPPTGVPTPTSAEPPLPRLLCPPDQFLCDALGCVDAAMVCDGQQDCLDGSDEAHCGALPTSGSSPSPLAWPSSPPPTCSPKQFSCGTGECLALEKRCDLSRDCADGSDESSCADCILSPWGGWSQCSHSCGLGVTSRQRVLLRGALPGGTCHTPRLDTRACFLRACPVPGAWAAWGVWSSCDAECGGGMRSRTRSCTDPPPKNGGQPCAGEALQSQPCNLQPCGDTRECGPGMVLVQEGDCVQGLVPPCPQVCGDLSATSSCQSPCQEGCRCPPGLFLQEGTCVNASQCHCHQGQQRWLPSQVFLRDGCSQCVCRDGVVTCEDTACPIACAWSAWSLWTLCDRSCGVGMQERFRSPSNPAAANGGAPCDGDTREVRECHTPCATAEPSSGWSSWTPWSPCSRSCFHHVDQRGRRHRFRHCEGMGTCPGLGVQEEPCDTAPCPVAGVWMPWSAWSECSAPCDAGVQTRSRTCTPPAFGGAECTGPHLQTRNCNTRPCGAQCPDTMQYLTAEECRHSEGRCPWICQDLGAGVACTAQCQPGCHCPAGLLLQNGTCVPPSHCLCHHRGHLYQPGDINALDTCNNCTCVTGQMVCSTETCPVPCTWSNWTAWSTCSHSCDVGMRRRYRVPIVPPLAGGGPPCQGPSMEVEFCSLQPCRAVAPWGPWSECSVSCGGGYRNRTRDGPPLHSLEFSTCNPAPCPGKEPGVCPPGKQWQACAQGAASCAELSAAPPADGSCHPGCYCPPGALLLNNECVAEAACPCAVDGVLYQPGDVVPQGCHNCSCIAGRVTNCSQEDCGDVDGPWTPWTPWSECSASCGPGRQRRYRFCSAHPGVPCAEPQPQERPCARQPCHSPDCAAVPGSVFSHCRPPCPRSCDDISHCVWHRQPGCYCTNGTLLDATGTACVALENCTCLDAHSGQRHQPGQSVPRGDGCNNCTCTQGRLLCTGLPCPVPGAWCEWSPWTPCSRSCGDEAATRHRVCSCPAPQQGGAGCPGGLEGHGDTGMQLQHQECPSVPPCPEDGAWAAWGPWSGCGGCGGQAVRTRSCSSPPARFGGLPCAGEARQSRACPWATSSCPECAGGLVAFTCGKPCPHSCEDLREDTACMATPRCLPACACPHGQLLQDGDCVPPELCRCAWAPSKNGSIWEQDGAVPMQELQPGETVQRHCQNCTCKSGTLQCHAEPGCRADGGWSPWGPWSPCSPGCQAGTQLASRQCNNPTPQLGGRGCSGHSQRQRPCPATEGCPEEEPWGEWSPWGPCSASCGGGEQLRHRDCPPPGGCPGLALQSKTCNTHVCREAGCPPGRLYRECQQGEGCPYSCAHLAGRIACFPGGCQEGCHCPTGTLLHHGHCLQECPCVLTAEVLRKLRNSSADLQAAPHLLGTRGPPLALDQELPPGSTIHSACTSCTCLHGRLNCSEPVCPRDGGFSPWGPWSSCSRSCGGLGVMTRRRGCTNPEPARGGRDCAGPRSDSKYCQSPECPAVPTTEPGPGVAGAEEEEGFGPWSPWSPCSKTCTHPERPATKTRERPCVGTAVCSGDGFQEQPCNLPLCSDVPPCQGEDCAGLNCSWAPWGPWTECSRSCGVGRQQRLRAYSPPGASGRWCPGILSAFVQRRFCSLQACKVDGAWSAWSPWSRCDRTCGGGRAVRTRSCTRPPPKNGGQRCPGERHQLHLCNAQPCDDSCPPGMALVTCANHCPRHCGDLQEGIVCREEEHCEPGCRCPNGTLEQDGGCVPLAHCECTDAQGHGWVPGSTHHDGCNNCTCLEGRLRCTDRLCPPLRCPWSRWSRWSPCSVTCGDGQQTRFRTPTAGSWDEECQGEQMENRGCAAGPCPPLCPQGSWERRLGDMWLQGECQRCTCTPEGTVCEDTTCAGAEHCTWGTWSPCSRSCGTGLASREGSCPCPFPGPPGAVCNASTGDGARPHREVQACYLRPCPAECSWSAWSSWGGCSCSSPLQHRYRHRHGTGLCVGLDVELHPCNTSGCSESSCEPPFEFQPCSPPCARLCSTLQHPELCPAQSHCLPGCFCPQGLLEQRSACVPPEQCDCLHTNESGDLVTLSPGDIILLGCKECVCQDGALQCSSEGCQGLLPLSPWSEWTPCSTCLPLFPSHLGDATPHVSVQHRYRACLDPQSGQPWSGDTAVCSAELQQQRLCPDPDICQELCLWSPWGPWGPCQQPCSGSFRLRHRHLQRLAGSGQCQGAQTQSESCNTAVCPGEDCEKQGRVFATTCANSCPRACADLWQHVECVQGGCKPGCRCPQGQLLQDGLCVPTAQCRCGLSGDNGTQELWPGQEATIECHNCTCENGTMVCPALPCPSYGPWSTWSPCSSSCGSGRTSRHRTCEPNPGGVPCMASGMQETAECSPQPCPAGCQLSPWSPWSPCSSSCGGGRSERSRELLGGEEEPCPIPALRQHRVCNVHNCTQECPRSQVHRECANACPHACADLRPQTQCLPQPCQPGCACPPGQVLQDGACVPPEECRCTLDSTMPGVLNLSREEQEQEHAPGSRLQHRCNTCICIRGTFNCSQEECNVDCLWSPWSPWSPCSVTCGMGERLSHRHPLRQRLYEGAECLGPPVRRAACHLPDCACPEGERWQGHEVPPGCEQSCRDILDETPANCTPSPSPGCTCEPGHYRNSSGHCVPSTLCECLHQGQLHQPGSEWQEQCARCRCVDGKANCTDGCTPLSCPEGEVKVREPGRCCPVCRMEWPEEPSSMCRRFTELRNITKGPCSLPNVEVSFCSGRCPSRTAVTPEEPYLQTLCECCSYRLDPGSPVRILSLPCAGGAAEPVVLPIIHSCECSSCQGGDFSKR</sequence>
<protein>
    <recommendedName>
        <fullName>SCO-spondin</fullName>
    </recommendedName>
</protein>
<comment type="function">
    <text evidence="1">Involved in the modulation of neuronal aggregation (By similarity). May be involved in developmental events during the formation of the central nervous system (By similarity).</text>
</comment>
<comment type="subcellular location">
    <subcellularLocation>
        <location evidence="1">Secreted</location>
        <location evidence="1">Extracellular space</location>
    </subcellularLocation>
</comment>
<comment type="similarity">
    <text evidence="10">Belongs to the thrombospondin family.</text>
</comment>
<keyword id="KW-0106">Calcium</keyword>
<keyword id="KW-0130">Cell adhesion</keyword>
<keyword id="KW-1015">Disulfide bond</keyword>
<keyword id="KW-0245">EGF-like domain</keyword>
<keyword id="KW-0325">Glycoprotein</keyword>
<keyword id="KW-1185">Reference proteome</keyword>
<keyword id="KW-0677">Repeat</keyword>
<keyword id="KW-0964">Secreted</keyword>
<keyword id="KW-0732">Signal</keyword>
<evidence type="ECO:0000250" key="1">
    <source>
        <dbReference type="UniProtKB" id="P98167"/>
    </source>
</evidence>
<evidence type="ECO:0000255" key="2"/>
<evidence type="ECO:0000255" key="3">
    <source>
        <dbReference type="PROSITE-ProRule" id="PRU00039"/>
    </source>
</evidence>
<evidence type="ECO:0000255" key="4">
    <source>
        <dbReference type="PROSITE-ProRule" id="PRU00081"/>
    </source>
</evidence>
<evidence type="ECO:0000255" key="5">
    <source>
        <dbReference type="PROSITE-ProRule" id="PRU00124"/>
    </source>
</evidence>
<evidence type="ECO:0000255" key="6">
    <source>
        <dbReference type="PROSITE-ProRule" id="PRU00210"/>
    </source>
</evidence>
<evidence type="ECO:0000255" key="7">
    <source>
        <dbReference type="PROSITE-ProRule" id="PRU00220"/>
    </source>
</evidence>
<evidence type="ECO:0000255" key="8">
    <source>
        <dbReference type="PROSITE-ProRule" id="PRU00580"/>
    </source>
</evidence>
<evidence type="ECO:0000256" key="9">
    <source>
        <dbReference type="SAM" id="MobiDB-lite"/>
    </source>
</evidence>
<evidence type="ECO:0000305" key="10"/>